<feature type="transit peptide" description="Chloroplast" evidence="1">
    <location>
        <begin position="1"/>
        <end position="45"/>
    </location>
</feature>
<feature type="chain" id="PRO_0000030453" description="Large ribosomal subunit protein bL12cy">
    <location>
        <begin position="46"/>
        <end position="174"/>
    </location>
</feature>
<keyword id="KW-0150">Chloroplast</keyword>
<keyword id="KW-0934">Plastid</keyword>
<keyword id="KW-0687">Ribonucleoprotein</keyword>
<keyword id="KW-0689">Ribosomal protein</keyword>
<keyword id="KW-0809">Transit peptide</keyword>
<comment type="subcellular location">
    <subcellularLocation>
        <location evidence="3">Plastid</location>
        <location evidence="3">Chloroplast</location>
    </subcellularLocation>
</comment>
<comment type="similarity">
    <text evidence="3">Belongs to the bacterial ribosomal protein bL12 family.</text>
</comment>
<accession>Q06036</accession>
<dbReference type="EMBL" id="X68340">
    <property type="protein sequence ID" value="CAA48414.1"/>
    <property type="molecule type" value="mRNA"/>
</dbReference>
<dbReference type="SMR" id="Q06036"/>
<dbReference type="GO" id="GO:0009507">
    <property type="term" value="C:chloroplast"/>
    <property type="evidence" value="ECO:0007669"/>
    <property type="project" value="UniProtKB-SubCell"/>
</dbReference>
<dbReference type="GO" id="GO:1990904">
    <property type="term" value="C:ribonucleoprotein complex"/>
    <property type="evidence" value="ECO:0007669"/>
    <property type="project" value="UniProtKB-KW"/>
</dbReference>
<dbReference type="GO" id="GO:0005840">
    <property type="term" value="C:ribosome"/>
    <property type="evidence" value="ECO:0007669"/>
    <property type="project" value="UniProtKB-KW"/>
</dbReference>
<dbReference type="GO" id="GO:0003729">
    <property type="term" value="F:mRNA binding"/>
    <property type="evidence" value="ECO:0007669"/>
    <property type="project" value="TreeGrafter"/>
</dbReference>
<dbReference type="GO" id="GO:0003735">
    <property type="term" value="F:structural constituent of ribosome"/>
    <property type="evidence" value="ECO:0007669"/>
    <property type="project" value="InterPro"/>
</dbReference>
<dbReference type="GO" id="GO:0006412">
    <property type="term" value="P:translation"/>
    <property type="evidence" value="ECO:0007669"/>
    <property type="project" value="InterPro"/>
</dbReference>
<dbReference type="CDD" id="cd00387">
    <property type="entry name" value="Ribosomal_L7_L12"/>
    <property type="match status" value="1"/>
</dbReference>
<dbReference type="FunFam" id="3.30.1390.10:FF:000001">
    <property type="entry name" value="50S ribosomal protein L7/L12"/>
    <property type="match status" value="1"/>
</dbReference>
<dbReference type="Gene3D" id="3.30.1390.10">
    <property type="match status" value="1"/>
</dbReference>
<dbReference type="Gene3D" id="1.20.5.710">
    <property type="entry name" value="Single helix bin"/>
    <property type="match status" value="1"/>
</dbReference>
<dbReference type="HAMAP" id="MF_00368">
    <property type="entry name" value="Ribosomal_bL12"/>
    <property type="match status" value="1"/>
</dbReference>
<dbReference type="InterPro" id="IPR000206">
    <property type="entry name" value="Ribosomal_bL12"/>
</dbReference>
<dbReference type="InterPro" id="IPR013823">
    <property type="entry name" value="Ribosomal_bL12_C"/>
</dbReference>
<dbReference type="InterPro" id="IPR014719">
    <property type="entry name" value="Ribosomal_bL12_C/ClpS-like"/>
</dbReference>
<dbReference type="InterPro" id="IPR008932">
    <property type="entry name" value="Ribosomal_bL12_oligo"/>
</dbReference>
<dbReference type="InterPro" id="IPR036235">
    <property type="entry name" value="Ribosomal_bL12_oligo_N_sf"/>
</dbReference>
<dbReference type="NCBIfam" id="TIGR00855">
    <property type="entry name" value="L12"/>
    <property type="match status" value="1"/>
</dbReference>
<dbReference type="PANTHER" id="PTHR45987">
    <property type="entry name" value="39S RIBOSOMAL PROTEIN L12"/>
    <property type="match status" value="1"/>
</dbReference>
<dbReference type="PANTHER" id="PTHR45987:SF25">
    <property type="entry name" value="LARGE RIBOSOMAL SUBUNIT PROTEIN BL12C"/>
    <property type="match status" value="1"/>
</dbReference>
<dbReference type="Pfam" id="PF00542">
    <property type="entry name" value="Ribosomal_L12"/>
    <property type="match status" value="1"/>
</dbReference>
<dbReference type="Pfam" id="PF16320">
    <property type="entry name" value="Ribosomal_L12_N"/>
    <property type="match status" value="1"/>
</dbReference>
<dbReference type="SUPFAM" id="SSF54736">
    <property type="entry name" value="ClpS-like"/>
    <property type="match status" value="1"/>
</dbReference>
<dbReference type="SUPFAM" id="SSF48300">
    <property type="entry name" value="Ribosomal protein L7/12, oligomerisation (N-terminal) domain"/>
    <property type="match status" value="1"/>
</dbReference>
<gene>
    <name type="primary">RPL12-2</name>
</gene>
<name>RK122_SECCE</name>
<sequence length="174" mass="18319">MASTTFSSAFSILSLPSSSPSPPPWAPRTLPVANRRRRAAAVASTVTESPKVLELGDAIAGLTLEEARNLVDHLQERLCVSAASFPPAAAGLRAAAVEEAPVEQTEFDVVIEEVPSSARIATIKIVRALTNLALKEAKDLIEGLPKKLKEAVSKDEAEEAKKQLEGVGAKVSIA</sequence>
<organism>
    <name type="scientific">Secale cereale</name>
    <name type="common">Rye</name>
    <dbReference type="NCBI Taxonomy" id="4550"/>
    <lineage>
        <taxon>Eukaryota</taxon>
        <taxon>Viridiplantae</taxon>
        <taxon>Streptophyta</taxon>
        <taxon>Embryophyta</taxon>
        <taxon>Tracheophyta</taxon>
        <taxon>Spermatophyta</taxon>
        <taxon>Magnoliopsida</taxon>
        <taxon>Liliopsida</taxon>
        <taxon>Poales</taxon>
        <taxon>Poaceae</taxon>
        <taxon>BOP clade</taxon>
        <taxon>Pooideae</taxon>
        <taxon>Triticodae</taxon>
        <taxon>Triticeae</taxon>
        <taxon>Hordeinae</taxon>
        <taxon>Secale</taxon>
    </lineage>
</organism>
<reference key="1">
    <citation type="journal article" date="1993" name="Biochim. Biophys. Acta">
        <title>Identification of the nuclear-encoded chloroplast ribosomal protein L12 of the monocotyledonous plant Secale cereale and sequencing of two different cDNAs with strong codon bias.</title>
        <authorList>
            <person name="Schmidt M.W."/>
            <person name="Pichl L."/>
            <person name="Lepper M."/>
            <person name="Feierabend J."/>
        </authorList>
    </citation>
    <scope>NUCLEOTIDE SEQUENCE [MRNA]</scope>
    <source>
        <strain>cv. Halo</strain>
        <tissue>Leaf</tissue>
    </source>
</reference>
<proteinExistence type="evidence at transcript level"/>
<evidence type="ECO:0000255" key="1"/>
<evidence type="ECO:0000303" key="2">
    <source>
    </source>
</evidence>
<evidence type="ECO:0000305" key="3"/>
<protein>
    <recommendedName>
        <fullName evidence="3">Large ribosomal subunit protein bL12cy</fullName>
    </recommendedName>
    <alternativeName>
        <fullName evidence="3">50S ribosomal protein L12-2, chloroplastic</fullName>
    </alternativeName>
    <alternativeName>
        <fullName evidence="2">CL12-2</fullName>
    </alternativeName>
</protein>